<protein>
    <recommendedName>
        <fullName evidence="5">11-oxo-beta-amyrin 30-oxidase</fullName>
        <ecNumber evidence="3">1.14.14.115</ecNumber>
    </recommendedName>
    <alternativeName>
        <fullName evidence="5">Cytochrome P450 72A154</fullName>
    </alternativeName>
</protein>
<dbReference type="EC" id="1.14.14.115" evidence="3"/>
<dbReference type="EMBL" id="AB558153">
    <property type="protein sequence ID" value="BAL45207.1"/>
    <property type="molecule type" value="mRNA"/>
</dbReference>
<dbReference type="EMBL" id="MN567153">
    <property type="protein sequence ID" value="QMX78160.1"/>
    <property type="molecule type" value="mRNA"/>
</dbReference>
<dbReference type="SMR" id="H1A988"/>
<dbReference type="KEGG" id="ag:BAL45207"/>
<dbReference type="BioCyc" id="MetaCyc:MONOMER-17470"/>
<dbReference type="GO" id="GO:0016020">
    <property type="term" value="C:membrane"/>
    <property type="evidence" value="ECO:0007669"/>
    <property type="project" value="UniProtKB-SubCell"/>
</dbReference>
<dbReference type="GO" id="GO:0102375">
    <property type="term" value="F:11-oxo-beta-amyrin 30-oxidase activity"/>
    <property type="evidence" value="ECO:0007669"/>
    <property type="project" value="UniProtKB-EC"/>
</dbReference>
<dbReference type="GO" id="GO:0020037">
    <property type="term" value="F:heme binding"/>
    <property type="evidence" value="ECO:0007669"/>
    <property type="project" value="InterPro"/>
</dbReference>
<dbReference type="GO" id="GO:0005506">
    <property type="term" value="F:iron ion binding"/>
    <property type="evidence" value="ECO:0007669"/>
    <property type="project" value="InterPro"/>
</dbReference>
<dbReference type="GO" id="GO:0016709">
    <property type="term" value="F:oxidoreductase activity, acting on paired donors, with incorporation or reduction of molecular oxygen, NAD(P)H as one donor, and incorporation of one atom of oxygen"/>
    <property type="evidence" value="ECO:0000314"/>
    <property type="project" value="UniProtKB"/>
</dbReference>
<dbReference type="GO" id="GO:1902382">
    <property type="term" value="P:11-oxo-beta-amyrin catabolic process"/>
    <property type="evidence" value="ECO:0000314"/>
    <property type="project" value="UniProtKB"/>
</dbReference>
<dbReference type="GO" id="GO:1902386">
    <property type="term" value="P:glycyrrhetinate biosynthetic process"/>
    <property type="evidence" value="ECO:0000314"/>
    <property type="project" value="UniProtKB"/>
</dbReference>
<dbReference type="CDD" id="cd20642">
    <property type="entry name" value="CYP72"/>
    <property type="match status" value="1"/>
</dbReference>
<dbReference type="FunFam" id="1.10.630.10:FF:000029">
    <property type="entry name" value="Cytochrome P450 734A1"/>
    <property type="match status" value="1"/>
</dbReference>
<dbReference type="Gene3D" id="1.10.630.10">
    <property type="entry name" value="Cytochrome P450"/>
    <property type="match status" value="1"/>
</dbReference>
<dbReference type="InterPro" id="IPR001128">
    <property type="entry name" value="Cyt_P450"/>
</dbReference>
<dbReference type="InterPro" id="IPR017972">
    <property type="entry name" value="Cyt_P450_CS"/>
</dbReference>
<dbReference type="InterPro" id="IPR002401">
    <property type="entry name" value="Cyt_P450_E_grp-I"/>
</dbReference>
<dbReference type="InterPro" id="IPR036396">
    <property type="entry name" value="Cyt_P450_sf"/>
</dbReference>
<dbReference type="InterPro" id="IPR050665">
    <property type="entry name" value="Cytochrome_P450_Monooxygen"/>
</dbReference>
<dbReference type="PANTHER" id="PTHR24282:SF253">
    <property type="entry name" value="11-OXO-BETA-AMYRIN 30-OXIDASE"/>
    <property type="match status" value="1"/>
</dbReference>
<dbReference type="PANTHER" id="PTHR24282">
    <property type="entry name" value="CYTOCHROME P450 FAMILY MEMBER"/>
    <property type="match status" value="1"/>
</dbReference>
<dbReference type="Pfam" id="PF00067">
    <property type="entry name" value="p450"/>
    <property type="match status" value="1"/>
</dbReference>
<dbReference type="PRINTS" id="PR00463">
    <property type="entry name" value="EP450I"/>
</dbReference>
<dbReference type="PRINTS" id="PR00385">
    <property type="entry name" value="P450"/>
</dbReference>
<dbReference type="SUPFAM" id="SSF48264">
    <property type="entry name" value="Cytochrome P450"/>
    <property type="match status" value="1"/>
</dbReference>
<dbReference type="PROSITE" id="PS00086">
    <property type="entry name" value="CYTOCHROME_P450"/>
    <property type="match status" value="1"/>
</dbReference>
<gene>
    <name evidence="5" type="primary">CYP72A154</name>
</gene>
<accession>H1A988</accession>
<accession>A0A7G5VWJ8</accession>
<keyword id="KW-0349">Heme</keyword>
<keyword id="KW-0408">Iron</keyword>
<keyword id="KW-0472">Membrane</keyword>
<keyword id="KW-0479">Metal-binding</keyword>
<keyword id="KW-0503">Monooxygenase</keyword>
<keyword id="KW-0560">Oxidoreductase</keyword>
<keyword id="KW-0812">Transmembrane</keyword>
<keyword id="KW-1133">Transmembrane helix</keyword>
<comment type="function">
    <text evidence="3 4">Involved in the biosynthesis of Glycyrrhetinic acid (GA), a natural product which exhibits anti-inflammatory activity (PubMed:31138208). Involved in the biosynthesis of the triterpenoid saponin glycyrrhizin (PubMed:22128119). Catalyzes three sequential oxidation steps at C-30 of 11-oxo-beta-amyrin (PubMed:22128119). Also able to catalyze C-30 monohydroxylation of beta-amyrin to produce 30-hydroxy-beta-amyrin (PubMed:22128119). May be also responsible for the oxidation at positions C-22 and C-29 in addition to C-30 (PubMed:22128119).</text>
</comment>
<comment type="catalytic activity">
    <reaction evidence="3">
        <text>11-oxo-beta-amyrin + 3 reduced [NADPH--hemoprotein reductase] + 3 O2 = glycyrrhetinate + 3 oxidized [NADPH--hemoprotein reductase] + 4 H2O + 4 H(+)</text>
        <dbReference type="Rhea" id="RHEA:35499"/>
        <dbReference type="Rhea" id="RHEA-COMP:11964"/>
        <dbReference type="Rhea" id="RHEA-COMP:11965"/>
        <dbReference type="ChEBI" id="CHEBI:15377"/>
        <dbReference type="ChEBI" id="CHEBI:15378"/>
        <dbReference type="ChEBI" id="CHEBI:15379"/>
        <dbReference type="ChEBI" id="CHEBI:17573"/>
        <dbReference type="ChEBI" id="CHEBI:57618"/>
        <dbReference type="ChEBI" id="CHEBI:58210"/>
        <dbReference type="ChEBI" id="CHEBI:63184"/>
        <dbReference type="EC" id="1.14.14.115"/>
    </reaction>
</comment>
<comment type="catalytic activity">
    <reaction evidence="3">
        <text>11-oxo-beta-amyrin + reduced [NADPH--hemoprotein reductase] + O2 = 30-hydroxy-11-oxo-beta-amyrin + oxidized [NADPH--hemoprotein reductase] + H2O + H(+)</text>
        <dbReference type="Rhea" id="RHEA:35503"/>
        <dbReference type="Rhea" id="RHEA-COMP:11964"/>
        <dbReference type="Rhea" id="RHEA-COMP:11965"/>
        <dbReference type="ChEBI" id="CHEBI:15377"/>
        <dbReference type="ChEBI" id="CHEBI:15378"/>
        <dbReference type="ChEBI" id="CHEBI:15379"/>
        <dbReference type="ChEBI" id="CHEBI:57618"/>
        <dbReference type="ChEBI" id="CHEBI:58210"/>
        <dbReference type="ChEBI" id="CHEBI:63184"/>
        <dbReference type="ChEBI" id="CHEBI:71576"/>
    </reaction>
</comment>
<comment type="catalytic activity">
    <reaction evidence="3">
        <text>30-hydroxy-11-oxo-beta-amyrin + reduced [NADPH--hemoprotein reductase] + O2 = glycyrrhetaldehyde + oxidized [NADPH--hemoprotein reductase] + 2 H2O + H(+)</text>
        <dbReference type="Rhea" id="RHEA:35507"/>
        <dbReference type="Rhea" id="RHEA-COMP:11964"/>
        <dbReference type="Rhea" id="RHEA-COMP:11965"/>
        <dbReference type="ChEBI" id="CHEBI:15377"/>
        <dbReference type="ChEBI" id="CHEBI:15378"/>
        <dbReference type="ChEBI" id="CHEBI:15379"/>
        <dbReference type="ChEBI" id="CHEBI:57618"/>
        <dbReference type="ChEBI" id="CHEBI:58210"/>
        <dbReference type="ChEBI" id="CHEBI:71576"/>
        <dbReference type="ChEBI" id="CHEBI:71577"/>
    </reaction>
</comment>
<comment type="catalytic activity">
    <reaction evidence="3">
        <text>glycyrrhetaldehyde + reduced [NADPH--hemoprotein reductase] + O2 = glycyrrhetinate + oxidized [NADPH--hemoprotein reductase] + H2O + 2 H(+)</text>
        <dbReference type="Rhea" id="RHEA:35511"/>
        <dbReference type="Rhea" id="RHEA-COMP:11964"/>
        <dbReference type="Rhea" id="RHEA-COMP:11965"/>
        <dbReference type="ChEBI" id="CHEBI:15377"/>
        <dbReference type="ChEBI" id="CHEBI:15378"/>
        <dbReference type="ChEBI" id="CHEBI:15379"/>
        <dbReference type="ChEBI" id="CHEBI:17573"/>
        <dbReference type="ChEBI" id="CHEBI:57618"/>
        <dbReference type="ChEBI" id="CHEBI:58210"/>
        <dbReference type="ChEBI" id="CHEBI:71577"/>
    </reaction>
</comment>
<comment type="cofactor">
    <cofactor evidence="1">
        <name>heme</name>
        <dbReference type="ChEBI" id="CHEBI:30413"/>
    </cofactor>
</comment>
<comment type="subcellular location">
    <subcellularLocation>
        <location evidence="6">Membrane</location>
        <topology evidence="6">Single-pass membrane protein</topology>
    </subcellularLocation>
</comment>
<comment type="tissue specificity">
    <text evidence="3">Expressed in roots, stolons and stems. Not detected in leaves.</text>
</comment>
<comment type="biotechnology">
    <text evidence="4">Saccharomyces cerevisiae expressing Glycyrrhiza uralensis CYP88D6 and CYP72A154, combined with the expression of Arabidopsis thaliana beta-amyrin synthase (beta-AS) and NADPH-cytochrome P450 reductase, accumulates glycyrrhetinic acid (GA) and, to lower levels, beta-amyrin; these GA production was increased in the presence of G.uralensis cytochrome b5 (GuCYB5).</text>
</comment>
<comment type="similarity">
    <text evidence="6">Belongs to the cytochrome P450 family.</text>
</comment>
<organism>
    <name type="scientific">Glycyrrhiza uralensis</name>
    <name type="common">Chinese licorice</name>
    <name type="synonym">Glycyrrhiza shiheziensis</name>
    <dbReference type="NCBI Taxonomy" id="74613"/>
    <lineage>
        <taxon>Eukaryota</taxon>
        <taxon>Viridiplantae</taxon>
        <taxon>Streptophyta</taxon>
        <taxon>Embryophyta</taxon>
        <taxon>Tracheophyta</taxon>
        <taxon>Spermatophyta</taxon>
        <taxon>Magnoliopsida</taxon>
        <taxon>eudicotyledons</taxon>
        <taxon>Gunneridae</taxon>
        <taxon>Pentapetalae</taxon>
        <taxon>rosids</taxon>
        <taxon>fabids</taxon>
        <taxon>Fabales</taxon>
        <taxon>Fabaceae</taxon>
        <taxon>Papilionoideae</taxon>
        <taxon>50 kb inversion clade</taxon>
        <taxon>NPAAA clade</taxon>
        <taxon>Hologalegina</taxon>
        <taxon>IRL clade</taxon>
        <taxon>Galegeae</taxon>
        <taxon>Glycyrrhiza</taxon>
    </lineage>
</organism>
<reference key="1">
    <citation type="journal article" date="2011" name="Plant Cell">
        <title>Triterpene functional genomics in licorice for identification of CYP72A154 involved in the biosynthesis of glycyrrhizin.</title>
        <authorList>
            <person name="Seki H."/>
            <person name="Sawai S."/>
            <person name="Ohyama K."/>
            <person name="Mizutani M."/>
            <person name="Ohnishi T."/>
            <person name="Sudo H."/>
            <person name="Fukushima E.O."/>
            <person name="Akashi T."/>
            <person name="Aoki T."/>
            <person name="Saito K."/>
            <person name="Muranaka T."/>
        </authorList>
    </citation>
    <scope>NUCLEOTIDE SEQUENCE [MRNA]</scope>
    <scope>FUNCTION</scope>
    <scope>CATALYTIC ACTIVITY</scope>
    <scope>TISSUE SPECIFICITY</scope>
</reference>
<reference key="2">
    <citation type="submission" date="2019-10" db="EMBL/GenBank/DDBJ databases">
        <authorList>
            <person name="Bi Q."/>
            <person name="Shen H."/>
        </authorList>
    </citation>
    <scope>NUCLEOTIDE SEQUENCE [MRNA]</scope>
</reference>
<reference key="3">
    <citation type="journal article" date="2019" name="Microb. Cell Fact.">
        <title>Efficient production of glycyrrhetinic acid in metabolically engineered Saccharomyces cerevisiae via an integrated strategy.</title>
        <authorList>
            <person name="Wang C."/>
            <person name="Su X."/>
            <person name="Sun M."/>
            <person name="Zhang M."/>
            <person name="Wu J."/>
            <person name="Xing J."/>
            <person name="Wang Y."/>
            <person name="Xue J."/>
            <person name="Liu X."/>
            <person name="Sun W."/>
            <person name="Chen S."/>
        </authorList>
    </citation>
    <scope>FUNCTION</scope>
    <scope>BIOTECHNOLOGY</scope>
    <scope>REVIEW</scope>
</reference>
<proteinExistence type="evidence at protein level"/>
<name>C7254_GLYUR</name>
<evidence type="ECO:0000250" key="1"/>
<evidence type="ECO:0000255" key="2"/>
<evidence type="ECO:0000269" key="3">
    <source>
    </source>
</evidence>
<evidence type="ECO:0000269" key="4">
    <source>
    </source>
</evidence>
<evidence type="ECO:0000303" key="5">
    <source>
    </source>
</evidence>
<evidence type="ECO:0000305" key="6"/>
<feature type="chain" id="PRO_0000424183" description="11-oxo-beta-amyrin 30-oxidase">
    <location>
        <begin position="1"/>
        <end position="523"/>
    </location>
</feature>
<feature type="transmembrane region" description="Helical" evidence="2">
    <location>
        <begin position="9"/>
        <end position="29"/>
    </location>
</feature>
<feature type="binding site" description="axial binding residue" evidence="1">
    <location>
        <position position="471"/>
    </location>
    <ligand>
        <name>heme</name>
        <dbReference type="ChEBI" id="CHEBI:30413"/>
    </ligand>
    <ligandPart>
        <name>Fe</name>
        <dbReference type="ChEBI" id="CHEBI:18248"/>
    </ligandPart>
</feature>
<feature type="sequence conflict" description="In Ref. 2; QMX78160." evidence="6" ref="2">
    <original>V</original>
    <variation>A</variation>
    <location>
        <position position="25"/>
    </location>
</feature>
<feature type="sequence conflict" description="In Ref. 2; QMX78160." evidence="6" ref="2">
    <original>V</original>
    <variation>I</variation>
    <location>
        <position position="148"/>
    </location>
</feature>
<feature type="sequence conflict" description="In Ref. 2; QMX78160." evidence="6" ref="2">
    <original>E</original>
    <variation>D</variation>
    <location>
        <position position="267"/>
    </location>
</feature>
<feature type="sequence conflict" description="In Ref. 2; QMX78160." evidence="6" ref="2">
    <original>R</original>
    <variation>K</variation>
    <location>
        <position position="360"/>
    </location>
</feature>
<feature type="sequence conflict" description="In Ref. 2; QMX78160." evidence="6" ref="2">
    <original>V</original>
    <variation>F</variation>
    <location>
        <position position="421"/>
    </location>
</feature>
<feature type="sequence conflict" description="In Ref. 2; QMX78160." evidence="6" ref="2">
    <original>E</original>
    <variation>D</variation>
    <location>
        <position position="449"/>
    </location>
</feature>
<sequence>MDASSTPGAIWVVLTVILAAIPIWVCHMVNTLWLRPKRLERHLRAQGLHGDPYKLSLDNSKQTYMLKLQQEAQSKSIGLSKDDAAPRIFSLAHQTVHKYGKNSFAWEGTAPKVIITDPEQIKEVFNKIQDFPKPKLNPIAKYISIGLVQYEGDKWAKHRKIINPAFHLEKLKGMLPAFSHSCHEMISKWKGLLSSDGTCEVDVWPFLQNLTCDVISRTAFGSSYAEGAKIFELLKRQGYALMTARYARIPLWWLLPSTTKRRMKEIERGIRDSLEGIIRKREKALKSGKSTDDDLLGILLQSNHIENKGDENSKSAGMTTQEVMEECKLFYLAGQETTAALLAWTMVLLGKHPEWQARARQEVLQVFGNQNPNFEGLGRLKIVTMILYEVLRLYPPGIYLTRALRKDLKLGNLLLPAGVQVSVPILLIHHDEGIWGNDAKEFNPERFAEGIAKATKGQVCYFPFGWGPRICVGQNFALLEAKIVLSLLLQNFSFELSPTYAHVPTTVLTLQPKHGAPIILHKL</sequence>